<keyword id="KW-0010">Activator</keyword>
<keyword id="KW-0238">DNA-binding</keyword>
<keyword id="KW-1185">Reference proteome</keyword>
<keyword id="KW-0678">Repressor</keyword>
<keyword id="KW-0804">Transcription</keyword>
<keyword id="KW-0805">Transcription regulation</keyword>
<sequence>MQSLHGNCLIAYARHKYILTMVNGEYRYFNGGDLVFADASQIRVDKCVENFVLVSRDTLSLFLPMLKEEALNLHAHKKVSSLLVHHCSRDIPVFQEVAQLSQNKNLRYAEMLRKRALIFALLSVFLEDDHFIPLLLNVLQPNMRTRVCTVINNNIAHEWTLARIASELLMSPSLLKKKLREEETSYSQLLTECRMQRALQLIVIHGFSIKRVAVSCGYHSVSYFIYVFRNYYGMTPTEYQERSAQGLPNRDSAASIVAQGNFYGTDCSAEGIRL</sequence>
<gene>
    <name type="primary">gadX</name>
    <name type="ordered locus">Z4929</name>
    <name type="ordered locus">ECs4396</name>
</gene>
<evidence type="ECO:0000250" key="1"/>
<evidence type="ECO:0000255" key="2">
    <source>
        <dbReference type="PROSITE-ProRule" id="PRU00593"/>
    </source>
</evidence>
<name>GADX_ECO57</name>
<accession>P58230</accession>
<organism>
    <name type="scientific">Escherichia coli O157:H7</name>
    <dbReference type="NCBI Taxonomy" id="83334"/>
    <lineage>
        <taxon>Bacteria</taxon>
        <taxon>Pseudomonadati</taxon>
        <taxon>Pseudomonadota</taxon>
        <taxon>Gammaproteobacteria</taxon>
        <taxon>Enterobacterales</taxon>
        <taxon>Enterobacteriaceae</taxon>
        <taxon>Escherichia</taxon>
    </lineage>
</organism>
<feature type="chain" id="PRO_0000194520" description="HTH-type transcriptional regulator GadX">
    <location>
        <begin position="1"/>
        <end position="274"/>
    </location>
</feature>
<feature type="domain" description="HTH araC/xylS-type" evidence="2">
    <location>
        <begin position="145"/>
        <end position="242"/>
    </location>
</feature>
<feature type="DNA-binding region" description="H-T-H motif" evidence="2">
    <location>
        <begin position="162"/>
        <end position="183"/>
    </location>
</feature>
<feature type="DNA-binding region" description="H-T-H motif" evidence="2">
    <location>
        <begin position="209"/>
        <end position="232"/>
    </location>
</feature>
<dbReference type="EMBL" id="AE005174">
    <property type="protein sequence ID" value="AAG58657.1"/>
    <property type="molecule type" value="Genomic_DNA"/>
</dbReference>
<dbReference type="EMBL" id="BA000007">
    <property type="protein sequence ID" value="BAB37819.1"/>
    <property type="molecule type" value="Genomic_DNA"/>
</dbReference>
<dbReference type="PIR" id="D91178">
    <property type="entry name" value="D91178"/>
</dbReference>
<dbReference type="PIR" id="E86024">
    <property type="entry name" value="E86024"/>
</dbReference>
<dbReference type="RefSeq" id="NP_312423.1">
    <property type="nucleotide sequence ID" value="NC_002695.1"/>
</dbReference>
<dbReference type="RefSeq" id="WP_001191074.1">
    <property type="nucleotide sequence ID" value="NZ_VOAI01000004.1"/>
</dbReference>
<dbReference type="SMR" id="P58230"/>
<dbReference type="STRING" id="155864.Z4929"/>
<dbReference type="GeneID" id="915747"/>
<dbReference type="KEGG" id="ece:Z4929"/>
<dbReference type="KEGG" id="ecs:ECs_4396"/>
<dbReference type="PATRIC" id="fig|386585.9.peg.4595"/>
<dbReference type="eggNOG" id="COG2207">
    <property type="taxonomic scope" value="Bacteria"/>
</dbReference>
<dbReference type="HOGENOM" id="CLU_091292_0_0_6"/>
<dbReference type="OMA" id="NIANDWS"/>
<dbReference type="Proteomes" id="UP000000558">
    <property type="component" value="Chromosome"/>
</dbReference>
<dbReference type="Proteomes" id="UP000002519">
    <property type="component" value="Chromosome"/>
</dbReference>
<dbReference type="GO" id="GO:0005829">
    <property type="term" value="C:cytosol"/>
    <property type="evidence" value="ECO:0007669"/>
    <property type="project" value="TreeGrafter"/>
</dbReference>
<dbReference type="GO" id="GO:0003700">
    <property type="term" value="F:DNA-binding transcription factor activity"/>
    <property type="evidence" value="ECO:0007669"/>
    <property type="project" value="InterPro"/>
</dbReference>
<dbReference type="GO" id="GO:0000976">
    <property type="term" value="F:transcription cis-regulatory region binding"/>
    <property type="evidence" value="ECO:0007669"/>
    <property type="project" value="TreeGrafter"/>
</dbReference>
<dbReference type="FunFam" id="1.10.10.60:FF:000267">
    <property type="entry name" value="HTH-type transcriptional regulator GadX"/>
    <property type="match status" value="1"/>
</dbReference>
<dbReference type="Gene3D" id="1.10.10.60">
    <property type="entry name" value="Homeodomain-like"/>
    <property type="match status" value="1"/>
</dbReference>
<dbReference type="InterPro" id="IPR009057">
    <property type="entry name" value="Homeodomain-like_sf"/>
</dbReference>
<dbReference type="InterPro" id="IPR018060">
    <property type="entry name" value="HTH_AraC"/>
</dbReference>
<dbReference type="InterPro" id="IPR018062">
    <property type="entry name" value="HTH_AraC-typ_CS"/>
</dbReference>
<dbReference type="InterPro" id="IPR020449">
    <property type="entry name" value="Tscrpt_reg_AraC-type_HTH"/>
</dbReference>
<dbReference type="NCBIfam" id="NF007432">
    <property type="entry name" value="PRK09978.1"/>
    <property type="match status" value="1"/>
</dbReference>
<dbReference type="PANTHER" id="PTHR47894">
    <property type="entry name" value="HTH-TYPE TRANSCRIPTIONAL REGULATOR GADX"/>
    <property type="match status" value="1"/>
</dbReference>
<dbReference type="PANTHER" id="PTHR47894:SF4">
    <property type="entry name" value="HTH-TYPE TRANSCRIPTIONAL REGULATOR GADX"/>
    <property type="match status" value="1"/>
</dbReference>
<dbReference type="Pfam" id="PF12833">
    <property type="entry name" value="HTH_18"/>
    <property type="match status" value="1"/>
</dbReference>
<dbReference type="PRINTS" id="PR00032">
    <property type="entry name" value="HTHARAC"/>
</dbReference>
<dbReference type="SMART" id="SM00342">
    <property type="entry name" value="HTH_ARAC"/>
    <property type="match status" value="1"/>
</dbReference>
<dbReference type="SUPFAM" id="SSF46689">
    <property type="entry name" value="Homeodomain-like"/>
    <property type="match status" value="1"/>
</dbReference>
<dbReference type="PROSITE" id="PS00041">
    <property type="entry name" value="HTH_ARAC_FAMILY_1"/>
    <property type="match status" value="1"/>
</dbReference>
<dbReference type="PROSITE" id="PS01124">
    <property type="entry name" value="HTH_ARAC_FAMILY_2"/>
    <property type="match status" value="1"/>
</dbReference>
<reference key="1">
    <citation type="journal article" date="2001" name="Nature">
        <title>Genome sequence of enterohaemorrhagic Escherichia coli O157:H7.</title>
        <authorList>
            <person name="Perna N.T."/>
            <person name="Plunkett G. III"/>
            <person name="Burland V."/>
            <person name="Mau B."/>
            <person name="Glasner J.D."/>
            <person name="Rose D.J."/>
            <person name="Mayhew G.F."/>
            <person name="Evans P.S."/>
            <person name="Gregor J."/>
            <person name="Kirkpatrick H.A."/>
            <person name="Posfai G."/>
            <person name="Hackett J."/>
            <person name="Klink S."/>
            <person name="Boutin A."/>
            <person name="Shao Y."/>
            <person name="Miller L."/>
            <person name="Grotbeck E.J."/>
            <person name="Davis N.W."/>
            <person name="Lim A."/>
            <person name="Dimalanta E.T."/>
            <person name="Potamousis K."/>
            <person name="Apodaca J."/>
            <person name="Anantharaman T.S."/>
            <person name="Lin J."/>
            <person name="Yen G."/>
            <person name="Schwartz D.C."/>
            <person name="Welch R.A."/>
            <person name="Blattner F.R."/>
        </authorList>
    </citation>
    <scope>NUCLEOTIDE SEQUENCE [LARGE SCALE GENOMIC DNA]</scope>
    <source>
        <strain>O157:H7 / EDL933 / ATCC 700927 / EHEC</strain>
    </source>
</reference>
<reference key="2">
    <citation type="journal article" date="2001" name="DNA Res.">
        <title>Complete genome sequence of enterohemorrhagic Escherichia coli O157:H7 and genomic comparison with a laboratory strain K-12.</title>
        <authorList>
            <person name="Hayashi T."/>
            <person name="Makino K."/>
            <person name="Ohnishi M."/>
            <person name="Kurokawa K."/>
            <person name="Ishii K."/>
            <person name="Yokoyama K."/>
            <person name="Han C.-G."/>
            <person name="Ohtsubo E."/>
            <person name="Nakayama K."/>
            <person name="Murata T."/>
            <person name="Tanaka M."/>
            <person name="Tobe T."/>
            <person name="Iida T."/>
            <person name="Takami H."/>
            <person name="Honda T."/>
            <person name="Sasakawa C."/>
            <person name="Ogasawara N."/>
            <person name="Yasunaga T."/>
            <person name="Kuhara S."/>
            <person name="Shiba T."/>
            <person name="Hattori M."/>
            <person name="Shinagawa H."/>
        </authorList>
    </citation>
    <scope>NUCLEOTIDE SEQUENCE [LARGE SCALE GENOMIC DNA]</scope>
    <source>
        <strain>O157:H7 / Sakai / RIMD 0509952 / EHEC</strain>
    </source>
</reference>
<proteinExistence type="inferred from homology"/>
<comment type="function">
    <text evidence="1">Positively regulates the expression of about fifteen genes involved in acid resistance such as gadA, gadB and gadC. Depending on the conditions (growth phase and medium), can repress gadW (By similarity).</text>
</comment>
<comment type="subunit">
    <text evidence="1">Homodimer.</text>
</comment>
<comment type="induction">
    <text evidence="1">Expression can be activated by RpoS and repressed by CRP, H-NS and GadW, depending on the conditions.</text>
</comment>
<protein>
    <recommendedName>
        <fullName>HTH-type transcriptional regulator GadX</fullName>
    </recommendedName>
</protein>